<evidence type="ECO:0000255" key="1">
    <source>
        <dbReference type="PROSITE-ProRule" id="PRU01016"/>
    </source>
</evidence>
<evidence type="ECO:0000255" key="2">
    <source>
        <dbReference type="PROSITE-ProRule" id="PRU10018"/>
    </source>
</evidence>
<evidence type="ECO:0000269" key="3">
    <source>
    </source>
</evidence>
<evidence type="ECO:0000303" key="4">
    <source>
    </source>
</evidence>
<evidence type="ECO:0000303" key="5">
    <source>
    </source>
</evidence>
<feature type="chain" id="PRO_0000087871" description="Type II methyltransferase M.CviJI">
    <location>
        <begin position="1"/>
        <end position="367"/>
    </location>
</feature>
<feature type="domain" description="SAM-dependent MTase C5-type" evidence="1">
    <location>
        <begin position="3"/>
        <end position="367"/>
    </location>
</feature>
<feature type="active site" evidence="1 2">
    <location>
        <position position="73"/>
    </location>
</feature>
<keyword id="KW-0238">DNA-binding</keyword>
<keyword id="KW-0489">Methyltransferase</keyword>
<keyword id="KW-0680">Restriction system</keyword>
<keyword id="KW-0949">S-adenosyl-L-methionine</keyword>
<keyword id="KW-0808">Transferase</keyword>
<comment type="function">
    <text evidence="3 4">A methylase that recognizes the double-stranded sequence 5'-RGCY-3', methylates C-3 on both strands, and protects the DNA from cleavage by the CviJI endonuclease.</text>
</comment>
<comment type="catalytic activity">
    <reaction evidence="2">
        <text>a 2'-deoxycytidine in DNA + S-adenosyl-L-methionine = a 5-methyl-2'-deoxycytidine in DNA + S-adenosyl-L-homocysteine + H(+)</text>
        <dbReference type="Rhea" id="RHEA:13681"/>
        <dbReference type="Rhea" id="RHEA-COMP:11369"/>
        <dbReference type="Rhea" id="RHEA-COMP:11370"/>
        <dbReference type="ChEBI" id="CHEBI:15378"/>
        <dbReference type="ChEBI" id="CHEBI:57856"/>
        <dbReference type="ChEBI" id="CHEBI:59789"/>
        <dbReference type="ChEBI" id="CHEBI:85452"/>
        <dbReference type="ChEBI" id="CHEBI:85454"/>
        <dbReference type="EC" id="2.1.1.37"/>
    </reaction>
</comment>
<comment type="similarity">
    <text evidence="1">Belongs to the class I-like SAM-binding methyltransferase superfamily. C5-methyltransferase family.</text>
</comment>
<protein>
    <recommendedName>
        <fullName evidence="4">Type II methyltransferase M.CviJI</fullName>
        <shortName evidence="5">M.CviJI</shortName>
        <ecNumber>2.1.1.37</ecNumber>
    </recommendedName>
    <alternativeName>
        <fullName>Cytosine-specific methyltransferase CviJI</fullName>
    </alternativeName>
    <alternativeName>
        <fullName>Modification methylase CviJI</fullName>
    </alternativeName>
</protein>
<proteinExistence type="inferred from homology"/>
<organismHost>
    <name type="scientific">Chlorella</name>
    <dbReference type="NCBI Taxonomy" id="3071"/>
</organismHost>
<reference key="1">
    <citation type="journal article" date="1990" name="Virology">
        <title>Cloning and sequencing the cytosine methyltransferase gene M. CviJI from Chlorella virus IL-3A.</title>
        <authorList>
            <person name="Shields S.L."/>
            <person name="Burbank D.E."/>
            <person name="Grabherr R."/>
            <person name="van Etten J.L."/>
        </authorList>
    </citation>
    <scope>NUCLEOTIDE SEQUENCE [GENOMIC DNA]</scope>
</reference>
<reference key="2">
    <citation type="journal article" date="1996" name="Nucleic Acids Res.">
        <title>Molecular cloning of the three base restriction endonuclease R.CviJI from eukaryotic Chlorella virus IL-3A.</title>
        <authorList>
            <person name="Swaminathan N."/>
            <person name="Mead D.A."/>
            <person name="McMaster K."/>
            <person name="George D."/>
            <person name="van Etten J.L."/>
            <person name="Skowron P.M."/>
        </authorList>
    </citation>
    <scope>NUCLEOTIDE SEQUENCE [GENOMIC DNA] OF 357-367</scope>
    <scope>FUNCTION</scope>
</reference>
<reference key="3">
    <citation type="journal article" date="2003" name="Nucleic Acids Res.">
        <title>A nomenclature for restriction enzymes, DNA methyltransferases, homing endonucleases and their genes.</title>
        <authorList>
            <person name="Roberts R.J."/>
            <person name="Belfort M."/>
            <person name="Bestor T."/>
            <person name="Bhagwat A.S."/>
            <person name="Bickle T.A."/>
            <person name="Bitinaite J."/>
            <person name="Blumenthal R.M."/>
            <person name="Degtyarev S.K."/>
            <person name="Dryden D.T."/>
            <person name="Dybvig K."/>
            <person name="Firman K."/>
            <person name="Gromova E.S."/>
            <person name="Gumport R.I."/>
            <person name="Halford S.E."/>
            <person name="Hattman S."/>
            <person name="Heitman J."/>
            <person name="Hornby D.P."/>
            <person name="Janulaitis A."/>
            <person name="Jeltsch A."/>
            <person name="Josephsen J."/>
            <person name="Kiss A."/>
            <person name="Klaenhammer T.R."/>
            <person name="Kobayashi I."/>
            <person name="Kong H."/>
            <person name="Krueger D.H."/>
            <person name="Lacks S."/>
            <person name="Marinus M.G."/>
            <person name="Miyahara M."/>
            <person name="Morgan R.D."/>
            <person name="Murray N.E."/>
            <person name="Nagaraja V."/>
            <person name="Piekarowicz A."/>
            <person name="Pingoud A."/>
            <person name="Raleigh E."/>
            <person name="Rao D.N."/>
            <person name="Reich N."/>
            <person name="Repin V.E."/>
            <person name="Selker E.U."/>
            <person name="Shaw P.C."/>
            <person name="Stein D.C."/>
            <person name="Stoddard B.L."/>
            <person name="Szybalski W."/>
            <person name="Trautner T.A."/>
            <person name="Van Etten J.L."/>
            <person name="Vitor J.M."/>
            <person name="Wilson G.G."/>
            <person name="Xu S.Y."/>
        </authorList>
    </citation>
    <scope>NOMENCLATURE</scope>
</reference>
<sequence>MSFRTLELFAGIAGISHGLRGISTPVAFVEINEDAQKFLKTKFSDASVFNDVTKFTKSDFPEDIDMITAGFPCTGFSIAGSRTGFEHKESGLFADVVRITEEYKPKIVFLENSHMLSHTYNLDVVVKKMDEIGYFCKWVTCRASIIGAHHQRHRWFCLAIRKDYEPEEIIVSVNATKFDWENNEPPCQVDNKSYENSTLVRLAGYSVVPDQIRYAFTGLFTGDFESSWKTTLTPGTIIGTEHKKMKGTYDKVINGYYENDVYYSFSRKEVHRAPLNISVKPRDIPEKHNGKTLVDREMIKKYWCTPCASYGTATAGCNVLTDRQSHALPTQVRFSYRGVCGRHLSGIWCAWLMGYDQEYLGYLVQYD</sequence>
<name>MTC1_PBCVI</name>
<dbReference type="EC" id="2.1.1.37"/>
<dbReference type="EMBL" id="M27265">
    <property type="protein sequence ID" value="AAA88826.1"/>
    <property type="molecule type" value="Genomic_DNA"/>
</dbReference>
<dbReference type="EMBL" id="U09001">
    <property type="protein sequence ID" value="AAC55063.1"/>
    <property type="molecule type" value="Genomic_DNA"/>
</dbReference>
<dbReference type="PIR" id="A46355">
    <property type="entry name" value="A46355"/>
</dbReference>
<dbReference type="SMR" id="P36216"/>
<dbReference type="PRO" id="PR:P36216"/>
<dbReference type="GO" id="GO:0003886">
    <property type="term" value="F:DNA (cytosine-5-)-methyltransferase activity"/>
    <property type="evidence" value="ECO:0007669"/>
    <property type="project" value="UniProtKB-EC"/>
</dbReference>
<dbReference type="GO" id="GO:0003677">
    <property type="term" value="F:DNA binding"/>
    <property type="evidence" value="ECO:0007669"/>
    <property type="project" value="UniProtKB-KW"/>
</dbReference>
<dbReference type="GO" id="GO:0009307">
    <property type="term" value="P:DNA restriction-modification system"/>
    <property type="evidence" value="ECO:0007669"/>
    <property type="project" value="UniProtKB-KW"/>
</dbReference>
<dbReference type="GO" id="GO:0032259">
    <property type="term" value="P:methylation"/>
    <property type="evidence" value="ECO:0007669"/>
    <property type="project" value="UniProtKB-KW"/>
</dbReference>
<dbReference type="CDD" id="cd00315">
    <property type="entry name" value="Cyt_C5_DNA_methylase"/>
    <property type="match status" value="1"/>
</dbReference>
<dbReference type="Gene3D" id="3.40.50.150">
    <property type="entry name" value="Vaccinia Virus protein VP39"/>
    <property type="match status" value="1"/>
</dbReference>
<dbReference type="InterPro" id="IPR050750">
    <property type="entry name" value="C5-MTase"/>
</dbReference>
<dbReference type="InterPro" id="IPR018117">
    <property type="entry name" value="C5_DNA_meth_AS"/>
</dbReference>
<dbReference type="InterPro" id="IPR001525">
    <property type="entry name" value="C5_MeTfrase"/>
</dbReference>
<dbReference type="InterPro" id="IPR029063">
    <property type="entry name" value="SAM-dependent_MTases_sf"/>
</dbReference>
<dbReference type="NCBIfam" id="TIGR00675">
    <property type="entry name" value="dcm"/>
    <property type="match status" value="1"/>
</dbReference>
<dbReference type="PANTHER" id="PTHR46098">
    <property type="entry name" value="TRNA (CYTOSINE(38)-C(5))-METHYLTRANSFERASE"/>
    <property type="match status" value="1"/>
</dbReference>
<dbReference type="PANTHER" id="PTHR46098:SF1">
    <property type="entry name" value="TRNA (CYTOSINE(38)-C(5))-METHYLTRANSFERASE"/>
    <property type="match status" value="1"/>
</dbReference>
<dbReference type="Pfam" id="PF00145">
    <property type="entry name" value="DNA_methylase"/>
    <property type="match status" value="1"/>
</dbReference>
<dbReference type="PRINTS" id="PR00105">
    <property type="entry name" value="C5METTRFRASE"/>
</dbReference>
<dbReference type="SUPFAM" id="SSF53335">
    <property type="entry name" value="S-adenosyl-L-methionine-dependent methyltransferases"/>
    <property type="match status" value="1"/>
</dbReference>
<dbReference type="PROSITE" id="PS00094">
    <property type="entry name" value="C5_MTASE_1"/>
    <property type="match status" value="1"/>
</dbReference>
<dbReference type="PROSITE" id="PS51679">
    <property type="entry name" value="SAM_MT_C5"/>
    <property type="match status" value="1"/>
</dbReference>
<gene>
    <name evidence="5" type="primary">CVIJIM</name>
</gene>
<organism>
    <name type="scientific">Paramecium bursaria Chlorella virus IL3A</name>
    <name type="common">PBCV-IL3A</name>
    <dbReference type="NCBI Taxonomy" id="46019"/>
    <lineage>
        <taxon>Viruses</taxon>
        <taxon>Varidnaviria</taxon>
        <taxon>Bamfordvirae</taxon>
        <taxon>Nucleocytoviricota</taxon>
        <taxon>Megaviricetes</taxon>
        <taxon>Algavirales</taxon>
        <taxon>Phycodnaviridae</taxon>
        <taxon>Chlorovirus</taxon>
    </lineage>
</organism>
<accession>P36216</accession>